<protein>
    <recommendedName>
        <fullName>Putative uncharacterized protein FLJ45035</fullName>
    </recommendedName>
</protein>
<feature type="chain" id="PRO_0000342661" description="Putative uncharacterized protein FLJ45035">
    <location>
        <begin position="1"/>
        <end position="140"/>
    </location>
</feature>
<feature type="repeat" description="1">
    <location>
        <begin position="1"/>
        <end position="10"/>
    </location>
</feature>
<feature type="repeat" description="2">
    <location>
        <begin position="11"/>
        <end position="20"/>
    </location>
</feature>
<feature type="repeat" description="3">
    <location>
        <begin position="21"/>
        <end position="30"/>
    </location>
</feature>
<feature type="repeat" description="4">
    <location>
        <begin position="31"/>
        <end position="40"/>
    </location>
</feature>
<feature type="repeat" description="5">
    <location>
        <begin position="41"/>
        <end position="50"/>
    </location>
</feature>
<feature type="repeat" description="6">
    <location>
        <begin position="51"/>
        <end position="60"/>
    </location>
</feature>
<feature type="repeat" description="7">
    <location>
        <begin position="61"/>
        <end position="70"/>
    </location>
</feature>
<feature type="repeat" description="8">
    <location>
        <begin position="71"/>
        <end position="80"/>
    </location>
</feature>
<feature type="repeat" description="9">
    <location>
        <begin position="81"/>
        <end position="90"/>
    </location>
</feature>
<feature type="repeat" description="10">
    <location>
        <begin position="91"/>
        <end position="100"/>
    </location>
</feature>
<feature type="repeat" description="11">
    <location>
        <begin position="101"/>
        <end position="110"/>
    </location>
</feature>
<feature type="repeat" description="12">
    <location>
        <begin position="111"/>
        <end position="120"/>
    </location>
</feature>
<feature type="repeat" description="13">
    <location>
        <begin position="121"/>
        <end position="130"/>
    </location>
</feature>
<feature type="repeat" description="14">
    <location>
        <begin position="131"/>
        <end position="140"/>
    </location>
</feature>
<feature type="region of interest" description="14 X 10 AA tandem repeats of [MT]-F-[AG]-R-L-[CS]-P-V-[SI]-[ET]">
    <location>
        <begin position="1"/>
        <end position="140"/>
    </location>
</feature>
<sequence length="140" mass="15498">MFARLCPVSETFGRLCPVSETFARLCPVSETFARLCPVSETFARLCPVSETFGRLCPVSEMFGRLSPVSETFGRLCPVSETFGRLCPVSEMFARLCPVSETFGRLSPVSEMFGRLCPVSEMFGRLCPVSEMFGRLCPVIT</sequence>
<organism>
    <name type="scientific">Homo sapiens</name>
    <name type="common">Human</name>
    <dbReference type="NCBI Taxonomy" id="9606"/>
    <lineage>
        <taxon>Eukaryota</taxon>
        <taxon>Metazoa</taxon>
        <taxon>Chordata</taxon>
        <taxon>Craniata</taxon>
        <taxon>Vertebrata</taxon>
        <taxon>Euteleostomi</taxon>
        <taxon>Mammalia</taxon>
        <taxon>Eutheria</taxon>
        <taxon>Euarchontoglires</taxon>
        <taxon>Primates</taxon>
        <taxon>Haplorrhini</taxon>
        <taxon>Catarrhini</taxon>
        <taxon>Hominidae</taxon>
        <taxon>Homo</taxon>
    </lineage>
</organism>
<name>YD023_HUMAN</name>
<proteinExistence type="uncertain"/>
<keyword id="KW-1185">Reference proteome</keyword>
<keyword id="KW-0677">Repeat</keyword>
<evidence type="ECO:0000305" key="1"/>
<reference key="1">
    <citation type="journal article" date="2004" name="Nat. Genet.">
        <title>Complete sequencing and characterization of 21,243 full-length human cDNAs.</title>
        <authorList>
            <person name="Ota T."/>
            <person name="Suzuki Y."/>
            <person name="Nishikawa T."/>
            <person name="Otsuki T."/>
            <person name="Sugiyama T."/>
            <person name="Irie R."/>
            <person name="Wakamatsu A."/>
            <person name="Hayashi K."/>
            <person name="Sato H."/>
            <person name="Nagai K."/>
            <person name="Kimura K."/>
            <person name="Makita H."/>
            <person name="Sekine M."/>
            <person name="Obayashi M."/>
            <person name="Nishi T."/>
            <person name="Shibahara T."/>
            <person name="Tanaka T."/>
            <person name="Ishii S."/>
            <person name="Yamamoto J."/>
            <person name="Saito K."/>
            <person name="Kawai Y."/>
            <person name="Isono Y."/>
            <person name="Nakamura Y."/>
            <person name="Nagahari K."/>
            <person name="Murakami K."/>
            <person name="Yasuda T."/>
            <person name="Iwayanagi T."/>
            <person name="Wagatsuma M."/>
            <person name="Shiratori A."/>
            <person name="Sudo H."/>
            <person name="Hosoiri T."/>
            <person name="Kaku Y."/>
            <person name="Kodaira H."/>
            <person name="Kondo H."/>
            <person name="Sugawara M."/>
            <person name="Takahashi M."/>
            <person name="Kanda K."/>
            <person name="Yokoi T."/>
            <person name="Furuya T."/>
            <person name="Kikkawa E."/>
            <person name="Omura Y."/>
            <person name="Abe K."/>
            <person name="Kamihara K."/>
            <person name="Katsuta N."/>
            <person name="Sato K."/>
            <person name="Tanikawa M."/>
            <person name="Yamazaki M."/>
            <person name="Ninomiya K."/>
            <person name="Ishibashi T."/>
            <person name="Yamashita H."/>
            <person name="Murakawa K."/>
            <person name="Fujimori K."/>
            <person name="Tanai H."/>
            <person name="Kimata M."/>
            <person name="Watanabe M."/>
            <person name="Hiraoka S."/>
            <person name="Chiba Y."/>
            <person name="Ishida S."/>
            <person name="Ono Y."/>
            <person name="Takiguchi S."/>
            <person name="Watanabe S."/>
            <person name="Yosida M."/>
            <person name="Hotuta T."/>
            <person name="Kusano J."/>
            <person name="Kanehori K."/>
            <person name="Takahashi-Fujii A."/>
            <person name="Hara H."/>
            <person name="Tanase T.-O."/>
            <person name="Nomura Y."/>
            <person name="Togiya S."/>
            <person name="Komai F."/>
            <person name="Hara R."/>
            <person name="Takeuchi K."/>
            <person name="Arita M."/>
            <person name="Imose N."/>
            <person name="Musashino K."/>
            <person name="Yuuki H."/>
            <person name="Oshima A."/>
            <person name="Sasaki N."/>
            <person name="Aotsuka S."/>
            <person name="Yoshikawa Y."/>
            <person name="Matsunawa H."/>
            <person name="Ichihara T."/>
            <person name="Shiohata N."/>
            <person name="Sano S."/>
            <person name="Moriya S."/>
            <person name="Momiyama H."/>
            <person name="Satoh N."/>
            <person name="Takami S."/>
            <person name="Terashima Y."/>
            <person name="Suzuki O."/>
            <person name="Nakagawa S."/>
            <person name="Senoh A."/>
            <person name="Mizoguchi H."/>
            <person name="Goto Y."/>
            <person name="Shimizu F."/>
            <person name="Wakebe H."/>
            <person name="Hishigaki H."/>
            <person name="Watanabe T."/>
            <person name="Sugiyama A."/>
            <person name="Takemoto M."/>
            <person name="Kawakami B."/>
            <person name="Yamazaki M."/>
            <person name="Watanabe K."/>
            <person name="Kumagai A."/>
            <person name="Itakura S."/>
            <person name="Fukuzumi Y."/>
            <person name="Fujimori Y."/>
            <person name="Komiyama M."/>
            <person name="Tashiro H."/>
            <person name="Tanigami A."/>
            <person name="Fujiwara T."/>
            <person name="Ono T."/>
            <person name="Yamada K."/>
            <person name="Fujii Y."/>
            <person name="Ozaki K."/>
            <person name="Hirao M."/>
            <person name="Ohmori Y."/>
            <person name="Kawabata A."/>
            <person name="Hikiji T."/>
            <person name="Kobatake N."/>
            <person name="Inagaki H."/>
            <person name="Ikema Y."/>
            <person name="Okamoto S."/>
            <person name="Okitani R."/>
            <person name="Kawakami T."/>
            <person name="Noguchi S."/>
            <person name="Itoh T."/>
            <person name="Shigeta K."/>
            <person name="Senba T."/>
            <person name="Matsumura K."/>
            <person name="Nakajima Y."/>
            <person name="Mizuno T."/>
            <person name="Morinaga M."/>
            <person name="Sasaki M."/>
            <person name="Togashi T."/>
            <person name="Oyama M."/>
            <person name="Hata H."/>
            <person name="Watanabe M."/>
            <person name="Komatsu T."/>
            <person name="Mizushima-Sugano J."/>
            <person name="Satoh T."/>
            <person name="Shirai Y."/>
            <person name="Takahashi Y."/>
            <person name="Nakagawa K."/>
            <person name="Okumura K."/>
            <person name="Nagase T."/>
            <person name="Nomura N."/>
            <person name="Kikuchi H."/>
            <person name="Masuho Y."/>
            <person name="Yamashita R."/>
            <person name="Nakai K."/>
            <person name="Yada T."/>
            <person name="Nakamura Y."/>
            <person name="Ohara O."/>
            <person name="Isogai T."/>
            <person name="Sugano S."/>
        </authorList>
    </citation>
    <scope>NUCLEOTIDE SEQUENCE [LARGE SCALE MRNA]</scope>
    <source>
        <tissue>Brain</tissue>
    </source>
</reference>
<accession>Q6ZQT0</accession>
<comment type="caution">
    <text evidence="1">Product of a dubious CDS prediction.</text>
</comment>
<dbReference type="EMBL" id="AK128759">
    <property type="status" value="NOT_ANNOTATED_CDS"/>
    <property type="molecule type" value="mRNA"/>
</dbReference>
<dbReference type="iPTMnet" id="Q6ZQT0"/>
<dbReference type="PhosphoSitePlus" id="Q6ZQT0"/>
<dbReference type="BioMuta" id="-"/>
<dbReference type="DMDM" id="74710968"/>
<dbReference type="neXtProt" id="NX_Q6ZQT0"/>
<dbReference type="InParanoid" id="Q6ZQT0"/>
<dbReference type="PAN-GO" id="Q6ZQT0">
    <property type="GO annotations" value="0 GO annotations based on evolutionary models"/>
</dbReference>
<dbReference type="PhylomeDB" id="Q6ZQT0"/>
<dbReference type="Pharos" id="Q6ZQT0">
    <property type="development level" value="Tdark"/>
</dbReference>
<dbReference type="Proteomes" id="UP000005640">
    <property type="component" value="Unplaced"/>
</dbReference>
<dbReference type="RNAct" id="Q6ZQT0">
    <property type="molecule type" value="protein"/>
</dbReference>